<evidence type="ECO:0000250" key="1"/>
<evidence type="ECO:0000250" key="2">
    <source>
        <dbReference type="UniProtKB" id="P32485"/>
    </source>
</evidence>
<evidence type="ECO:0000250" key="3">
    <source>
        <dbReference type="UniProtKB" id="Q16539"/>
    </source>
</evidence>
<evidence type="ECO:0000250" key="4">
    <source>
        <dbReference type="UniProtKB" id="Q4WSF6"/>
    </source>
</evidence>
<evidence type="ECO:0000255" key="5">
    <source>
        <dbReference type="PROSITE-ProRule" id="PRU00159"/>
    </source>
</evidence>
<evidence type="ECO:0000255" key="6">
    <source>
        <dbReference type="PROSITE-ProRule" id="PRU10027"/>
    </source>
</evidence>
<evidence type="ECO:0000305" key="7"/>
<comment type="function">
    <text evidence="4">Proline-directed serine/threonine-protein kinase involved in a signal transduction pathway that is activated by changes in the osmolarity of the extracellular environment. Controls osmotic regulation of transcription of target genes.</text>
</comment>
<comment type="catalytic activity">
    <reaction evidence="2">
        <text>L-seryl-[protein] + ATP = O-phospho-L-seryl-[protein] + ADP + H(+)</text>
        <dbReference type="Rhea" id="RHEA:17989"/>
        <dbReference type="Rhea" id="RHEA-COMP:9863"/>
        <dbReference type="Rhea" id="RHEA-COMP:11604"/>
        <dbReference type="ChEBI" id="CHEBI:15378"/>
        <dbReference type="ChEBI" id="CHEBI:29999"/>
        <dbReference type="ChEBI" id="CHEBI:30616"/>
        <dbReference type="ChEBI" id="CHEBI:83421"/>
        <dbReference type="ChEBI" id="CHEBI:456216"/>
        <dbReference type="EC" id="2.7.11.24"/>
    </reaction>
    <physiologicalReaction direction="left-to-right" evidence="2">
        <dbReference type="Rhea" id="RHEA:17990"/>
    </physiologicalReaction>
</comment>
<comment type="catalytic activity">
    <reaction evidence="2">
        <text>L-threonyl-[protein] + ATP = O-phospho-L-threonyl-[protein] + ADP + H(+)</text>
        <dbReference type="Rhea" id="RHEA:46608"/>
        <dbReference type="Rhea" id="RHEA-COMP:11060"/>
        <dbReference type="Rhea" id="RHEA-COMP:11605"/>
        <dbReference type="ChEBI" id="CHEBI:15378"/>
        <dbReference type="ChEBI" id="CHEBI:30013"/>
        <dbReference type="ChEBI" id="CHEBI:30616"/>
        <dbReference type="ChEBI" id="CHEBI:61977"/>
        <dbReference type="ChEBI" id="CHEBI:456216"/>
        <dbReference type="EC" id="2.7.11.24"/>
    </reaction>
    <physiologicalReaction direction="left-to-right" evidence="2">
        <dbReference type="Rhea" id="RHEA:46609"/>
    </physiologicalReaction>
</comment>
<comment type="cofactor">
    <cofactor evidence="3">
        <name>Mg(2+)</name>
        <dbReference type="ChEBI" id="CHEBI:18420"/>
    </cofactor>
</comment>
<comment type="activity regulation">
    <text evidence="1">Activated by tyrosine and threonine phosphorylation.</text>
</comment>
<comment type="subcellular location">
    <subcellularLocation>
        <location evidence="1">Cytoplasm</location>
    </subcellularLocation>
    <subcellularLocation>
        <location evidence="1">Nucleus</location>
    </subcellularLocation>
</comment>
<comment type="domain">
    <text>The TXY motif contains the threonine and tyrosine residues whose phosphorylation activates the MAP kinases.</text>
</comment>
<comment type="PTM">
    <text evidence="1">Dually phosphorylated on Thr-171 and Tyr-173, which activates the enzyme.</text>
</comment>
<comment type="similarity">
    <text evidence="5">Belongs to the protein kinase superfamily. Ser/Thr protein kinase family. MAP kinase subfamily. HOG1 sub-subfamily.</text>
</comment>
<comment type="sequence caution" evidence="7">
    <conflict type="erroneous gene model prediction">
        <sequence resource="EMBL-CDS" id="CAK45557"/>
    </conflict>
</comment>
<keyword id="KW-0010">Activator</keyword>
<keyword id="KW-0067">ATP-binding</keyword>
<keyword id="KW-0963">Cytoplasm</keyword>
<keyword id="KW-0418">Kinase</keyword>
<keyword id="KW-0547">Nucleotide-binding</keyword>
<keyword id="KW-0539">Nucleus</keyword>
<keyword id="KW-0597">Phosphoprotein</keyword>
<keyword id="KW-1185">Reference proteome</keyword>
<keyword id="KW-0723">Serine/threonine-protein kinase</keyword>
<keyword id="KW-0804">Transcription</keyword>
<keyword id="KW-0805">Transcription regulation</keyword>
<keyword id="KW-0808">Transferase</keyword>
<protein>
    <recommendedName>
        <fullName>Mitogen-activated protein kinase hog1</fullName>
        <shortName>MAP kinase hog1</shortName>
        <ecNumber evidence="2">2.7.11.24</ecNumber>
    </recommendedName>
</protein>
<feature type="chain" id="PRO_0000289675" description="Mitogen-activated protein kinase hog1">
    <location>
        <begin position="1"/>
        <end position="365"/>
    </location>
</feature>
<feature type="domain" description="Protein kinase" evidence="5">
    <location>
        <begin position="20"/>
        <end position="299"/>
    </location>
</feature>
<feature type="short sequence motif" description="TXY">
    <location>
        <begin position="171"/>
        <end position="173"/>
    </location>
</feature>
<feature type="active site" description="Proton acceptor" evidence="5 6">
    <location>
        <position position="141"/>
    </location>
</feature>
<feature type="binding site" evidence="5">
    <location>
        <begin position="26"/>
        <end position="34"/>
    </location>
    <ligand>
        <name>ATP</name>
        <dbReference type="ChEBI" id="CHEBI:30616"/>
    </ligand>
</feature>
<feature type="binding site" evidence="5">
    <location>
        <position position="49"/>
    </location>
    <ligand>
        <name>ATP</name>
        <dbReference type="ChEBI" id="CHEBI:30616"/>
    </ligand>
</feature>
<feature type="modified residue" description="Phosphothreonine" evidence="1">
    <location>
        <position position="171"/>
    </location>
</feature>
<feature type="modified residue" description="Phosphotyrosine" evidence="1">
    <location>
        <position position="173"/>
    </location>
</feature>
<reference key="1">
    <citation type="journal article" date="2007" name="Nat. Biotechnol.">
        <title>Genome sequencing and analysis of the versatile cell factory Aspergillus niger CBS 513.88.</title>
        <authorList>
            <person name="Pel H.J."/>
            <person name="de Winde J.H."/>
            <person name="Archer D.B."/>
            <person name="Dyer P.S."/>
            <person name="Hofmann G."/>
            <person name="Schaap P.J."/>
            <person name="Turner G."/>
            <person name="de Vries R.P."/>
            <person name="Albang R."/>
            <person name="Albermann K."/>
            <person name="Andersen M.R."/>
            <person name="Bendtsen J.D."/>
            <person name="Benen J.A.E."/>
            <person name="van den Berg M."/>
            <person name="Breestraat S."/>
            <person name="Caddick M.X."/>
            <person name="Contreras R."/>
            <person name="Cornell M."/>
            <person name="Coutinho P.M."/>
            <person name="Danchin E.G.J."/>
            <person name="Debets A.J.M."/>
            <person name="Dekker P."/>
            <person name="van Dijck P.W.M."/>
            <person name="van Dijk A."/>
            <person name="Dijkhuizen L."/>
            <person name="Driessen A.J.M."/>
            <person name="d'Enfert C."/>
            <person name="Geysens S."/>
            <person name="Goosen C."/>
            <person name="Groot G.S.P."/>
            <person name="de Groot P.W.J."/>
            <person name="Guillemette T."/>
            <person name="Henrissat B."/>
            <person name="Herweijer M."/>
            <person name="van den Hombergh J.P.T.W."/>
            <person name="van den Hondel C.A.M.J.J."/>
            <person name="van der Heijden R.T.J.M."/>
            <person name="van der Kaaij R.M."/>
            <person name="Klis F.M."/>
            <person name="Kools H.J."/>
            <person name="Kubicek C.P."/>
            <person name="van Kuyk P.A."/>
            <person name="Lauber J."/>
            <person name="Lu X."/>
            <person name="van der Maarel M.J.E.C."/>
            <person name="Meulenberg R."/>
            <person name="Menke H."/>
            <person name="Mortimer M.A."/>
            <person name="Nielsen J."/>
            <person name="Oliver S.G."/>
            <person name="Olsthoorn M."/>
            <person name="Pal K."/>
            <person name="van Peij N.N.M.E."/>
            <person name="Ram A.F.J."/>
            <person name="Rinas U."/>
            <person name="Roubos J.A."/>
            <person name="Sagt C.M.J."/>
            <person name="Schmoll M."/>
            <person name="Sun J."/>
            <person name="Ussery D."/>
            <person name="Varga J."/>
            <person name="Vervecken W."/>
            <person name="van de Vondervoort P.J.J."/>
            <person name="Wedler H."/>
            <person name="Woesten H.A.B."/>
            <person name="Zeng A.-P."/>
            <person name="van Ooyen A.J.J."/>
            <person name="Visser J."/>
            <person name="Stam H."/>
        </authorList>
    </citation>
    <scope>NUCLEOTIDE SEQUENCE [LARGE SCALE GENOMIC DNA]</scope>
    <source>
        <strain>ATCC MYA-4892 / CBS 513.88 / FGSC A1513</strain>
    </source>
</reference>
<sequence length="365" mass="41666">MAEFVRAQIFGTTFEITSRYTDLQPVGMGAFGLVCSARDQLTGQPVAVKKIMKPFSTPVLSKRTYRELKLLKHLRHENIISLSDIFISPLEDIYFVTELLGTDLHRLLTSRPLEKQFIQYFLYQILRGLKYVHSAGVVHRDLKPSNILINENCDLKICDFGLARIQDPQMTGYVSTRYYRAPEIMLTWQKYDVEVDIWSAACIFAEMLEGKPLFPGKDHVNQFSIITELLGTPPDDVIQTICSENTLRFVKSLPKRERQPLASKFKNADPDAVDLLERMLVFDPKKRIRAGEALAHEYLAPYHDPTDEPVAEEKFDWSFNDADLPVDTWKIMYSEILDFHNIDQANDAGQVLVEGAVADGQQAFA</sequence>
<dbReference type="EC" id="2.7.11.24" evidence="2"/>
<dbReference type="EMBL" id="AM270168">
    <property type="protein sequence ID" value="CAK45557.1"/>
    <property type="status" value="ALT_SEQ"/>
    <property type="molecule type" value="Genomic_DNA"/>
</dbReference>
<dbReference type="SMR" id="A2QRF6"/>
<dbReference type="EnsemblFungi" id="CAK45557">
    <property type="protein sequence ID" value="CAK45557"/>
    <property type="gene ID" value="An08g05850"/>
</dbReference>
<dbReference type="Proteomes" id="UP000006706">
    <property type="component" value="Chromosome 8R"/>
</dbReference>
<dbReference type="GO" id="GO:0005737">
    <property type="term" value="C:cytoplasm"/>
    <property type="evidence" value="ECO:0007669"/>
    <property type="project" value="UniProtKB-SubCell"/>
</dbReference>
<dbReference type="GO" id="GO:0005634">
    <property type="term" value="C:nucleus"/>
    <property type="evidence" value="ECO:0007669"/>
    <property type="project" value="UniProtKB-SubCell"/>
</dbReference>
<dbReference type="GO" id="GO:0005524">
    <property type="term" value="F:ATP binding"/>
    <property type="evidence" value="ECO:0007669"/>
    <property type="project" value="UniProtKB-KW"/>
</dbReference>
<dbReference type="GO" id="GO:0004707">
    <property type="term" value="F:MAP kinase activity"/>
    <property type="evidence" value="ECO:0007669"/>
    <property type="project" value="UniProtKB-EC"/>
</dbReference>
<dbReference type="GO" id="GO:0106310">
    <property type="term" value="F:protein serine kinase activity"/>
    <property type="evidence" value="ECO:0007669"/>
    <property type="project" value="RHEA"/>
</dbReference>
<dbReference type="GO" id="GO:0051403">
    <property type="term" value="P:stress-activated MAPK cascade"/>
    <property type="evidence" value="ECO:0007669"/>
    <property type="project" value="InterPro"/>
</dbReference>
<dbReference type="CDD" id="cd07856">
    <property type="entry name" value="STKc_Sty1_Hog1"/>
    <property type="match status" value="1"/>
</dbReference>
<dbReference type="FunFam" id="1.10.510.10:FF:000049">
    <property type="entry name" value="Mitogen-activated protein kinase"/>
    <property type="match status" value="1"/>
</dbReference>
<dbReference type="FunFam" id="3.30.200.20:FF:000050">
    <property type="entry name" value="Mitogen-activated protein kinase"/>
    <property type="match status" value="1"/>
</dbReference>
<dbReference type="Gene3D" id="3.30.200.20">
    <property type="entry name" value="Phosphorylase Kinase, domain 1"/>
    <property type="match status" value="1"/>
</dbReference>
<dbReference type="Gene3D" id="1.10.510.10">
    <property type="entry name" value="Transferase(Phosphotransferase) domain 1"/>
    <property type="match status" value="1"/>
</dbReference>
<dbReference type="InterPro" id="IPR011009">
    <property type="entry name" value="Kinase-like_dom_sf"/>
</dbReference>
<dbReference type="InterPro" id="IPR050117">
    <property type="entry name" value="MAP_kinase"/>
</dbReference>
<dbReference type="InterPro" id="IPR003527">
    <property type="entry name" value="MAP_kinase_CS"/>
</dbReference>
<dbReference type="InterPro" id="IPR008352">
    <property type="entry name" value="MAPK_p38-like"/>
</dbReference>
<dbReference type="InterPro" id="IPR038783">
    <property type="entry name" value="MAPK_Sty1/Hog1"/>
</dbReference>
<dbReference type="InterPro" id="IPR000719">
    <property type="entry name" value="Prot_kinase_dom"/>
</dbReference>
<dbReference type="InterPro" id="IPR017441">
    <property type="entry name" value="Protein_kinase_ATP_BS"/>
</dbReference>
<dbReference type="InterPro" id="IPR008271">
    <property type="entry name" value="Ser/Thr_kinase_AS"/>
</dbReference>
<dbReference type="PANTHER" id="PTHR24055">
    <property type="entry name" value="MITOGEN-ACTIVATED PROTEIN KINASE"/>
    <property type="match status" value="1"/>
</dbReference>
<dbReference type="Pfam" id="PF00069">
    <property type="entry name" value="Pkinase"/>
    <property type="match status" value="1"/>
</dbReference>
<dbReference type="PRINTS" id="PR01773">
    <property type="entry name" value="P38MAPKINASE"/>
</dbReference>
<dbReference type="SMART" id="SM00220">
    <property type="entry name" value="S_TKc"/>
    <property type="match status" value="1"/>
</dbReference>
<dbReference type="SUPFAM" id="SSF56112">
    <property type="entry name" value="Protein kinase-like (PK-like)"/>
    <property type="match status" value="1"/>
</dbReference>
<dbReference type="PROSITE" id="PS01351">
    <property type="entry name" value="MAPK"/>
    <property type="match status" value="1"/>
</dbReference>
<dbReference type="PROSITE" id="PS00107">
    <property type="entry name" value="PROTEIN_KINASE_ATP"/>
    <property type="match status" value="1"/>
</dbReference>
<dbReference type="PROSITE" id="PS50011">
    <property type="entry name" value="PROTEIN_KINASE_DOM"/>
    <property type="match status" value="1"/>
</dbReference>
<dbReference type="PROSITE" id="PS00108">
    <property type="entry name" value="PROTEIN_KINASE_ST"/>
    <property type="match status" value="1"/>
</dbReference>
<gene>
    <name type="primary">hog1</name>
    <name type="ORF">An08g05850</name>
</gene>
<name>HOG1_ASPNC</name>
<proteinExistence type="inferred from homology"/>
<organism>
    <name type="scientific">Aspergillus niger (strain ATCC MYA-4892 / CBS 513.88 / FGSC A1513)</name>
    <dbReference type="NCBI Taxonomy" id="425011"/>
    <lineage>
        <taxon>Eukaryota</taxon>
        <taxon>Fungi</taxon>
        <taxon>Dikarya</taxon>
        <taxon>Ascomycota</taxon>
        <taxon>Pezizomycotina</taxon>
        <taxon>Eurotiomycetes</taxon>
        <taxon>Eurotiomycetidae</taxon>
        <taxon>Eurotiales</taxon>
        <taxon>Aspergillaceae</taxon>
        <taxon>Aspergillus</taxon>
        <taxon>Aspergillus subgen. Circumdati</taxon>
    </lineage>
</organism>
<accession>A2QRF6</accession>